<keyword id="KW-0238">DNA-binding</keyword>
<keyword id="KW-0658">Purine biosynthesis</keyword>
<keyword id="KW-0678">Repressor</keyword>
<keyword id="KW-0804">Transcription</keyword>
<keyword id="KW-0805">Transcription regulation</keyword>
<dbReference type="EMBL" id="CP001120">
    <property type="protein sequence ID" value="ACF65934.1"/>
    <property type="molecule type" value="Genomic_DNA"/>
</dbReference>
<dbReference type="RefSeq" id="WP_000190993.1">
    <property type="nucleotide sequence ID" value="NC_011083.1"/>
</dbReference>
<dbReference type="SMR" id="B4TH70"/>
<dbReference type="KEGG" id="seh:SeHA_C1563"/>
<dbReference type="HOGENOM" id="CLU_037628_6_2_6"/>
<dbReference type="UniPathway" id="UPA00488"/>
<dbReference type="Proteomes" id="UP000001866">
    <property type="component" value="Chromosome"/>
</dbReference>
<dbReference type="GO" id="GO:0003700">
    <property type="term" value="F:DNA-binding transcription factor activity"/>
    <property type="evidence" value="ECO:0007669"/>
    <property type="project" value="TreeGrafter"/>
</dbReference>
<dbReference type="GO" id="GO:0000976">
    <property type="term" value="F:transcription cis-regulatory region binding"/>
    <property type="evidence" value="ECO:0007669"/>
    <property type="project" value="TreeGrafter"/>
</dbReference>
<dbReference type="GO" id="GO:0045892">
    <property type="term" value="P:negative regulation of DNA-templated transcription"/>
    <property type="evidence" value="ECO:0007669"/>
    <property type="project" value="UniProtKB-UniRule"/>
</dbReference>
<dbReference type="GO" id="GO:0006164">
    <property type="term" value="P:purine nucleotide biosynthetic process"/>
    <property type="evidence" value="ECO:0007669"/>
    <property type="project" value="UniProtKB-UniPathway"/>
</dbReference>
<dbReference type="CDD" id="cd01392">
    <property type="entry name" value="HTH_LacI"/>
    <property type="match status" value="1"/>
</dbReference>
<dbReference type="CDD" id="cd06275">
    <property type="entry name" value="PBP1_PurR"/>
    <property type="match status" value="1"/>
</dbReference>
<dbReference type="FunFam" id="1.10.260.40:FF:000002">
    <property type="entry name" value="HTH-type transcriptional repressor PurR"/>
    <property type="match status" value="1"/>
</dbReference>
<dbReference type="FunFam" id="3.40.50.2300:FF:000045">
    <property type="entry name" value="HTH-type transcriptional repressor PurR"/>
    <property type="match status" value="1"/>
</dbReference>
<dbReference type="Gene3D" id="3.40.50.2300">
    <property type="match status" value="2"/>
</dbReference>
<dbReference type="Gene3D" id="1.10.260.40">
    <property type="entry name" value="lambda repressor-like DNA-binding domains"/>
    <property type="match status" value="1"/>
</dbReference>
<dbReference type="HAMAP" id="MF_01277">
    <property type="entry name" value="HTH_type_PurR"/>
    <property type="match status" value="1"/>
</dbReference>
<dbReference type="InterPro" id="IPR000843">
    <property type="entry name" value="HTH_LacI"/>
</dbReference>
<dbReference type="InterPro" id="IPR046335">
    <property type="entry name" value="LacI/GalR-like_sensor"/>
</dbReference>
<dbReference type="InterPro" id="IPR010982">
    <property type="entry name" value="Lambda_DNA-bd_dom_sf"/>
</dbReference>
<dbReference type="InterPro" id="IPR028082">
    <property type="entry name" value="Peripla_BP_I"/>
</dbReference>
<dbReference type="InterPro" id="IPR023588">
    <property type="entry name" value="Tscrpt_reg_HTH_PurR"/>
</dbReference>
<dbReference type="NCBIfam" id="NF007979">
    <property type="entry name" value="PRK10703.1"/>
    <property type="match status" value="1"/>
</dbReference>
<dbReference type="PANTHER" id="PTHR30146:SF148">
    <property type="entry name" value="HTH-TYPE TRANSCRIPTIONAL REPRESSOR PURR-RELATED"/>
    <property type="match status" value="1"/>
</dbReference>
<dbReference type="PANTHER" id="PTHR30146">
    <property type="entry name" value="LACI-RELATED TRANSCRIPTIONAL REPRESSOR"/>
    <property type="match status" value="1"/>
</dbReference>
<dbReference type="Pfam" id="PF00356">
    <property type="entry name" value="LacI"/>
    <property type="match status" value="1"/>
</dbReference>
<dbReference type="Pfam" id="PF13377">
    <property type="entry name" value="Peripla_BP_3"/>
    <property type="match status" value="1"/>
</dbReference>
<dbReference type="PRINTS" id="PR00036">
    <property type="entry name" value="HTHLACI"/>
</dbReference>
<dbReference type="SMART" id="SM00354">
    <property type="entry name" value="HTH_LACI"/>
    <property type="match status" value="1"/>
</dbReference>
<dbReference type="SUPFAM" id="SSF47413">
    <property type="entry name" value="lambda repressor-like DNA-binding domains"/>
    <property type="match status" value="1"/>
</dbReference>
<dbReference type="SUPFAM" id="SSF53822">
    <property type="entry name" value="Periplasmic binding protein-like I"/>
    <property type="match status" value="1"/>
</dbReference>
<dbReference type="PROSITE" id="PS00356">
    <property type="entry name" value="HTH_LACI_1"/>
    <property type="match status" value="1"/>
</dbReference>
<dbReference type="PROSITE" id="PS50932">
    <property type="entry name" value="HTH_LACI_2"/>
    <property type="match status" value="1"/>
</dbReference>
<sequence length="341" mass="38048">MATIKDVAKRANVSTTTVSHVINKTRFVAEETRNAVWAAIKELHYSPSAVARSLKVNHTKSIGLLATSSEAAYFAEIIEAVEKNCFQKGYTLILGNAWNNLEKQRAYLSMMAQKRVDGLLVMCSEYPEPLLSMLEEYRHIPMVVMDWGEAKADFTDTVIDNAFAGGYMAGRYLVERGHRDIGVIPGPLERNTGAGRLAGFMKAMEEALINVPDNWIVQGDFEPESGYHAMQQILSQSHRPTAVFCGGDIMAMGALCAADEMGLRVPQDVSVIGYDNVRNARYFTPALTTIHQPKDSLGETAFNMLLDRIVNKREESQSIEVHPRLVERRSVADGPFRDYRR</sequence>
<proteinExistence type="inferred from homology"/>
<gene>
    <name evidence="1" type="primary">purR</name>
    <name type="ordered locus">SeHA_C1563</name>
</gene>
<accession>B4TH70</accession>
<reference key="1">
    <citation type="journal article" date="2011" name="J. Bacteriol.">
        <title>Comparative genomics of 28 Salmonella enterica isolates: evidence for CRISPR-mediated adaptive sublineage evolution.</title>
        <authorList>
            <person name="Fricke W.F."/>
            <person name="Mammel M.K."/>
            <person name="McDermott P.F."/>
            <person name="Tartera C."/>
            <person name="White D.G."/>
            <person name="Leclerc J.E."/>
            <person name="Ravel J."/>
            <person name="Cebula T.A."/>
        </authorList>
    </citation>
    <scope>NUCLEOTIDE SEQUENCE [LARGE SCALE GENOMIC DNA]</scope>
    <source>
        <strain>SL476</strain>
    </source>
</reference>
<comment type="function">
    <text evidence="1">Is the main repressor of the genes involved in the de novo synthesis of purine nucleotides, regulating purB, purC, purEK, purF, purHD, purL, purMN and guaBA expression. PurR is allosterically activated to bind its cognate DNA by binding the purine corepressors, hypoxanthine or guanine, thereby effecting transcription repression.</text>
</comment>
<comment type="pathway">
    <text>Purine metabolism; purine nucleotide biosynthesis [regulation].</text>
</comment>
<comment type="subunit">
    <text evidence="1">Homodimer.</text>
</comment>
<comment type="domain">
    <text evidence="1">Consists of two structural and functional domains: an N-terminal DNA-binding domain, approximately the first 60 residues, and a larger C-terminal domain, approximately 280 residues, which imparts the function of corepressor binding and oligomerization.</text>
</comment>
<name>PURR_SALHS</name>
<organism>
    <name type="scientific">Salmonella heidelberg (strain SL476)</name>
    <dbReference type="NCBI Taxonomy" id="454169"/>
    <lineage>
        <taxon>Bacteria</taxon>
        <taxon>Pseudomonadati</taxon>
        <taxon>Pseudomonadota</taxon>
        <taxon>Gammaproteobacteria</taxon>
        <taxon>Enterobacterales</taxon>
        <taxon>Enterobacteriaceae</taxon>
        <taxon>Salmonella</taxon>
    </lineage>
</organism>
<protein>
    <recommendedName>
        <fullName evidence="1">HTH-type transcriptional repressor PurR</fullName>
    </recommendedName>
    <alternativeName>
        <fullName evidence="1">Pur regulon repressor</fullName>
    </alternativeName>
    <alternativeName>
        <fullName evidence="1">Purine nucleotide synthesis repressor</fullName>
    </alternativeName>
</protein>
<evidence type="ECO:0000255" key="1">
    <source>
        <dbReference type="HAMAP-Rule" id="MF_01277"/>
    </source>
</evidence>
<feature type="chain" id="PRO_1000140301" description="HTH-type transcriptional repressor PurR">
    <location>
        <begin position="1"/>
        <end position="341"/>
    </location>
</feature>
<feature type="domain" description="HTH lacI-type" evidence="1">
    <location>
        <begin position="2"/>
        <end position="56"/>
    </location>
</feature>
<feature type="DNA-binding region" description="H-T-H motif" evidence="1">
    <location>
        <begin position="4"/>
        <end position="23"/>
    </location>
</feature>
<feature type="DNA-binding region" evidence="1">
    <location>
        <begin position="48"/>
        <end position="56"/>
    </location>
</feature>
<feature type="binding site" evidence="1">
    <location>
        <position position="73"/>
    </location>
    <ligand>
        <name>hypoxanthine</name>
        <dbReference type="ChEBI" id="CHEBI:17368"/>
    </ligand>
</feature>
<feature type="binding site" evidence="1">
    <location>
        <position position="190"/>
    </location>
    <ligand>
        <name>hypoxanthine</name>
        <dbReference type="ChEBI" id="CHEBI:17368"/>
    </ligand>
</feature>
<feature type="binding site" evidence="1">
    <location>
        <position position="192"/>
    </location>
    <ligand>
        <name>hypoxanthine</name>
        <dbReference type="ChEBI" id="CHEBI:17368"/>
    </ligand>
</feature>
<feature type="binding site" evidence="1">
    <location>
        <position position="221"/>
    </location>
    <ligand>
        <name>hypoxanthine</name>
        <dbReference type="ChEBI" id="CHEBI:17368"/>
    </ligand>
</feature>
<feature type="binding site" evidence="1">
    <location>
        <position position="275"/>
    </location>
    <ligand>
        <name>hypoxanthine</name>
        <dbReference type="ChEBI" id="CHEBI:17368"/>
    </ligand>
</feature>